<dbReference type="EC" id="2.1.3.-" evidence="1"/>
<dbReference type="EMBL" id="CP000926">
    <property type="protein sequence ID" value="ABZ00255.1"/>
    <property type="status" value="ALT_INIT"/>
    <property type="molecule type" value="Genomic_DNA"/>
</dbReference>
<dbReference type="RefSeq" id="WP_041166579.1">
    <property type="nucleotide sequence ID" value="NC_010322.1"/>
</dbReference>
<dbReference type="SMR" id="B0KV19"/>
<dbReference type="KEGG" id="ppg:PputGB1_4366"/>
<dbReference type="eggNOG" id="COG2226">
    <property type="taxonomic scope" value="Bacteria"/>
</dbReference>
<dbReference type="HOGENOM" id="CLU_078475_0_0_6"/>
<dbReference type="Proteomes" id="UP000002157">
    <property type="component" value="Chromosome"/>
</dbReference>
<dbReference type="GO" id="GO:0016743">
    <property type="term" value="F:carboxyl- or carbamoyltransferase activity"/>
    <property type="evidence" value="ECO:0007669"/>
    <property type="project" value="UniProtKB-UniRule"/>
</dbReference>
<dbReference type="GO" id="GO:1904047">
    <property type="term" value="F:S-adenosyl-L-methionine binding"/>
    <property type="evidence" value="ECO:0007669"/>
    <property type="project" value="UniProtKB-UniRule"/>
</dbReference>
<dbReference type="GO" id="GO:0002098">
    <property type="term" value="P:tRNA wobble uridine modification"/>
    <property type="evidence" value="ECO:0007669"/>
    <property type="project" value="InterPro"/>
</dbReference>
<dbReference type="CDD" id="cd02440">
    <property type="entry name" value="AdoMet_MTases"/>
    <property type="match status" value="1"/>
</dbReference>
<dbReference type="Gene3D" id="3.40.50.150">
    <property type="entry name" value="Vaccinia Virus protein VP39"/>
    <property type="match status" value="1"/>
</dbReference>
<dbReference type="HAMAP" id="MF_01589">
    <property type="entry name" value="Cx_SAM_synthase"/>
    <property type="match status" value="1"/>
</dbReference>
<dbReference type="InterPro" id="IPR005271">
    <property type="entry name" value="CmoA"/>
</dbReference>
<dbReference type="InterPro" id="IPR041698">
    <property type="entry name" value="Methyltransf_25"/>
</dbReference>
<dbReference type="InterPro" id="IPR029063">
    <property type="entry name" value="SAM-dependent_MTases_sf"/>
</dbReference>
<dbReference type="NCBIfam" id="TIGR00740">
    <property type="entry name" value="carboxy-S-adenosyl-L-methionine synthase CmoA"/>
    <property type="match status" value="1"/>
</dbReference>
<dbReference type="NCBIfam" id="NF011995">
    <property type="entry name" value="PRK15451.1"/>
    <property type="match status" value="1"/>
</dbReference>
<dbReference type="PANTHER" id="PTHR43861:SF2">
    <property type="entry name" value="CARBOXY-S-ADENOSYL-L-METHIONINE SYNTHASE"/>
    <property type="match status" value="1"/>
</dbReference>
<dbReference type="PANTHER" id="PTHR43861">
    <property type="entry name" value="TRANS-ACONITATE 2-METHYLTRANSFERASE-RELATED"/>
    <property type="match status" value="1"/>
</dbReference>
<dbReference type="Pfam" id="PF13649">
    <property type="entry name" value="Methyltransf_25"/>
    <property type="match status" value="1"/>
</dbReference>
<dbReference type="PIRSF" id="PIRSF006325">
    <property type="entry name" value="MeTrfase_bac"/>
    <property type="match status" value="1"/>
</dbReference>
<dbReference type="SUPFAM" id="SSF53335">
    <property type="entry name" value="S-adenosyl-L-methionine-dependent methyltransferases"/>
    <property type="match status" value="1"/>
</dbReference>
<feature type="chain" id="PRO_0000381961" description="Carboxy-S-adenosyl-L-methionine synthase">
    <location>
        <begin position="1"/>
        <end position="247"/>
    </location>
</feature>
<feature type="binding site" evidence="1">
    <location>
        <position position="40"/>
    </location>
    <ligand>
        <name>S-adenosyl-L-methionine</name>
        <dbReference type="ChEBI" id="CHEBI:59789"/>
    </ligand>
</feature>
<feature type="binding site" evidence="1">
    <location>
        <begin position="65"/>
        <end position="67"/>
    </location>
    <ligand>
        <name>S-adenosyl-L-methionine</name>
        <dbReference type="ChEBI" id="CHEBI:59789"/>
    </ligand>
</feature>
<feature type="binding site" evidence="1">
    <location>
        <begin position="90"/>
        <end position="91"/>
    </location>
    <ligand>
        <name>S-adenosyl-L-methionine</name>
        <dbReference type="ChEBI" id="CHEBI:59789"/>
    </ligand>
</feature>
<feature type="binding site" evidence="1">
    <location>
        <begin position="122"/>
        <end position="123"/>
    </location>
    <ligand>
        <name>S-adenosyl-L-methionine</name>
        <dbReference type="ChEBI" id="CHEBI:59789"/>
    </ligand>
</feature>
<feature type="binding site" evidence="1">
    <location>
        <position position="137"/>
    </location>
    <ligand>
        <name>S-adenosyl-L-methionine</name>
        <dbReference type="ChEBI" id="CHEBI:59789"/>
    </ligand>
</feature>
<feature type="binding site" evidence="1">
    <location>
        <position position="204"/>
    </location>
    <ligand>
        <name>S-adenosyl-L-methionine</name>
        <dbReference type="ChEBI" id="CHEBI:59789"/>
    </ligand>
</feature>
<name>CMOA_PSEPG</name>
<organism>
    <name type="scientific">Pseudomonas putida (strain GB-1)</name>
    <dbReference type="NCBI Taxonomy" id="76869"/>
    <lineage>
        <taxon>Bacteria</taxon>
        <taxon>Pseudomonadati</taxon>
        <taxon>Pseudomonadota</taxon>
        <taxon>Gammaproteobacteria</taxon>
        <taxon>Pseudomonadales</taxon>
        <taxon>Pseudomonadaceae</taxon>
        <taxon>Pseudomonas</taxon>
    </lineage>
</organism>
<evidence type="ECO:0000255" key="1">
    <source>
        <dbReference type="HAMAP-Rule" id="MF_01589"/>
    </source>
</evidence>
<evidence type="ECO:0000305" key="2"/>
<proteinExistence type="inferred from homology"/>
<gene>
    <name evidence="1" type="primary">cmoA</name>
    <name type="ordered locus">PputGB1_4366</name>
</gene>
<protein>
    <recommendedName>
        <fullName evidence="1">Carboxy-S-adenosyl-L-methionine synthase</fullName>
        <shortName evidence="1">Cx-SAM synthase</shortName>
        <ecNumber evidence="1">2.1.3.-</ecNumber>
    </recommendedName>
</protein>
<keyword id="KW-0949">S-adenosyl-L-methionine</keyword>
<keyword id="KW-0808">Transferase</keyword>
<sequence length="247" mass="27707">MSKQPDRLFAQPLEQVPDFVFNEDVVRVFPDMIKRSVPGYPTIVENLGVLAARFAQPNTALYDLGASLGAVTQSLRRHVRSDGCRVIAVDNSAAMVERCRQYLTAQDSMFQELLPVQVLEADILALPFEPASVVAMNFTLQFIAPDQRLELLGRIRQALLPGGALILSEKLRFADEQEQDLLNELHLDFKRANGYSELEIAQKRSAIENVMRPDTLEAHQERLRAAGFSKVVPWFQCLNFASLIALP</sequence>
<reference key="1">
    <citation type="submission" date="2008-01" db="EMBL/GenBank/DDBJ databases">
        <title>Complete sequence of Pseudomonas putida GB-1.</title>
        <authorList>
            <consortium name="US DOE Joint Genome Institute"/>
            <person name="Copeland A."/>
            <person name="Lucas S."/>
            <person name="Lapidus A."/>
            <person name="Barry K."/>
            <person name="Glavina del Rio T."/>
            <person name="Dalin E."/>
            <person name="Tice H."/>
            <person name="Pitluck S."/>
            <person name="Bruce D."/>
            <person name="Goodwin L."/>
            <person name="Chertkov O."/>
            <person name="Brettin T."/>
            <person name="Detter J.C."/>
            <person name="Han C."/>
            <person name="Kuske C.R."/>
            <person name="Schmutz J."/>
            <person name="Larimer F."/>
            <person name="Land M."/>
            <person name="Hauser L."/>
            <person name="Kyrpides N."/>
            <person name="Kim E."/>
            <person name="McCarthy J.K."/>
            <person name="Richardson P."/>
        </authorList>
    </citation>
    <scope>NUCLEOTIDE SEQUENCE [LARGE SCALE GENOMIC DNA]</scope>
    <source>
        <strain>GB-1</strain>
    </source>
</reference>
<comment type="function">
    <text evidence="1">Catalyzes the conversion of S-adenosyl-L-methionine (SAM) to carboxy-S-adenosyl-L-methionine (Cx-SAM).</text>
</comment>
<comment type="catalytic activity">
    <reaction evidence="1">
        <text>prephenate + S-adenosyl-L-methionine = carboxy-S-adenosyl-L-methionine + 3-phenylpyruvate + H2O</text>
        <dbReference type="Rhea" id="RHEA:51692"/>
        <dbReference type="ChEBI" id="CHEBI:15377"/>
        <dbReference type="ChEBI" id="CHEBI:18005"/>
        <dbReference type="ChEBI" id="CHEBI:29934"/>
        <dbReference type="ChEBI" id="CHEBI:59789"/>
        <dbReference type="ChEBI" id="CHEBI:134278"/>
    </reaction>
</comment>
<comment type="subunit">
    <text evidence="1">Homodimer.</text>
</comment>
<comment type="similarity">
    <text evidence="1">Belongs to the class I-like SAM-binding methyltransferase superfamily. Cx-SAM synthase family.</text>
</comment>
<comment type="sequence caution" evidence="2">
    <conflict type="erroneous initiation">
        <sequence resource="EMBL-CDS" id="ABZ00255"/>
    </conflict>
</comment>
<accession>B0KV19</accession>